<feature type="chain" id="PRO_0000432903" description="Tail tube terminator protein">
    <location>
        <begin position="1"/>
        <end position="132"/>
    </location>
</feature>
<protein>
    <recommendedName>
        <fullName evidence="2">Tail tube terminator protein</fullName>
        <shortName>TrP</shortName>
    </recommendedName>
    <alternativeName>
        <fullName evidence="3">Gene product 12</fullName>
        <shortName evidence="3">gp12</shortName>
    </alternativeName>
    <alternativeName>
        <fullName>Tail-to-head joining protein</fullName>
        <shortName>THJP</shortName>
    </alternativeName>
</protein>
<reference key="1">
    <citation type="journal article" date="2000" name="J. Mol. Biol.">
        <title>Genomic sequence and analysis of the atypical temperate bacteriophage N15.</title>
        <authorList>
            <person name="Ravin V."/>
            <person name="Ravin N."/>
            <person name="Casjens S."/>
            <person name="Ford M.E."/>
            <person name="Hatfull G.F."/>
            <person name="Hendrix R.W."/>
        </authorList>
    </citation>
    <scope>NUCLEOTIDE SEQUENCE [LARGE SCALE GENOMIC DNA]</scope>
    <scope>IDENTIFICATION</scope>
</reference>
<organism evidence="5">
    <name type="scientific">Escherichia phage N15</name>
    <name type="common">Bacteriophage N15</name>
    <dbReference type="NCBI Taxonomy" id="1604876"/>
    <lineage>
        <taxon>Viruses</taxon>
        <taxon>Duplodnaviria</taxon>
        <taxon>Heunggongvirae</taxon>
        <taxon>Uroviricota</taxon>
        <taxon>Caudoviricetes</taxon>
        <taxon>Ravinvirus</taxon>
        <taxon>Ravinvirus N15</taxon>
    </lineage>
</organism>
<comment type="function">
    <text evidence="1">Plays an essential role in tail assembly by capping the rapidly polymerizing tail once it has reached its requisite length and serving as the interaction surface for the completion protein.</text>
</comment>
<comment type="subunit">
    <text evidence="1">Homohexamer. May bind to major tail protein and /or tape measure protein.</text>
</comment>
<comment type="subcellular location">
    <subcellularLocation>
        <location evidence="1">Virion</location>
    </subcellularLocation>
    <subcellularLocation>
        <location evidence="1">Host cytoplasm</location>
    </subcellularLocation>
</comment>
<comment type="similarity">
    <text evidence="3">Belongs to the lambda-like tail terminator protein family.</text>
</comment>
<keyword id="KW-1035">Host cytoplasm</keyword>
<keyword id="KW-0426">Late protein</keyword>
<keyword id="KW-1185">Reference proteome</keyword>
<keyword id="KW-1171">Viral genome ejection through host cell envelope</keyword>
<keyword id="KW-1243">Viral long flexible tail ejection system</keyword>
<keyword id="KW-1162">Viral penetration into host cytoplasm</keyword>
<keyword id="KW-1188">Viral release from host cell</keyword>
<keyword id="KW-1245">Viral tail assembly</keyword>
<keyword id="KW-1227">Viral tail protein</keyword>
<keyword id="KW-0946">Virion</keyword>
<keyword id="KW-1160">Virus entry into host cell</keyword>
<evidence type="ECO:0000250" key="1">
    <source>
        <dbReference type="UniProtKB" id="P03732"/>
    </source>
</evidence>
<evidence type="ECO:0000303" key="2">
    <source>
    </source>
</evidence>
<evidence type="ECO:0000305" key="3"/>
<evidence type="ECO:0000312" key="4">
    <source>
        <dbReference type="EMBL" id="AAC19049.1"/>
    </source>
</evidence>
<evidence type="ECO:0000312" key="5">
    <source>
        <dbReference type="Proteomes" id="UP000002132"/>
    </source>
</evidence>
<gene>
    <name evidence="4" type="primary">gene 12</name>
</gene>
<proteinExistence type="inferred from homology"/>
<name>TTTP_BPN15</name>
<accession>O64326</accession>
<organismHost>
    <name type="scientific">Escherichia coli</name>
    <dbReference type="NCBI Taxonomy" id="562"/>
</organismHost>
<dbReference type="EMBL" id="AF064539">
    <property type="protein sequence ID" value="AAC19049.1"/>
    <property type="molecule type" value="Genomic_DNA"/>
</dbReference>
<dbReference type="PIR" id="T13098">
    <property type="entry name" value="T13098"/>
</dbReference>
<dbReference type="RefSeq" id="NP_046907.1">
    <property type="nucleotide sequence ID" value="NC_001901.1"/>
</dbReference>
<dbReference type="SMR" id="O64326"/>
<dbReference type="GeneID" id="1261651"/>
<dbReference type="KEGG" id="vg:1261651"/>
<dbReference type="Proteomes" id="UP000002132">
    <property type="component" value="Genome"/>
</dbReference>
<dbReference type="GO" id="GO:0030430">
    <property type="term" value="C:host cell cytoplasm"/>
    <property type="evidence" value="ECO:0007669"/>
    <property type="project" value="UniProtKB-SubCell"/>
</dbReference>
<dbReference type="GO" id="GO:0098015">
    <property type="term" value="C:virus tail"/>
    <property type="evidence" value="ECO:0007669"/>
    <property type="project" value="UniProtKB-KW"/>
</dbReference>
<dbReference type="GO" id="GO:0099001">
    <property type="term" value="P:symbiont genome ejection through host cell envelope, long flexible tail mechanism"/>
    <property type="evidence" value="ECO:0007669"/>
    <property type="project" value="UniProtKB-KW"/>
</dbReference>
<dbReference type="GO" id="GO:0098003">
    <property type="term" value="P:viral tail assembly"/>
    <property type="evidence" value="ECO:0007669"/>
    <property type="project" value="UniProtKB-KW"/>
</dbReference>
<dbReference type="Gene3D" id="3.30.70.1700">
    <property type="entry name" value="Phage minor tail protein U"/>
    <property type="match status" value="1"/>
</dbReference>
<dbReference type="InterPro" id="IPR038512">
    <property type="entry name" value="GpU-like_sf"/>
</dbReference>
<dbReference type="InterPro" id="IPR009312">
    <property type="entry name" value="Phage_lambda_GpU-like"/>
</dbReference>
<dbReference type="InterPro" id="IPR035934">
    <property type="entry name" value="Phage_tail_protein-like_sf"/>
</dbReference>
<dbReference type="Pfam" id="PF06141">
    <property type="entry name" value="Phage_tail_U"/>
    <property type="match status" value="1"/>
</dbReference>
<dbReference type="SUPFAM" id="SSF143749">
    <property type="entry name" value="Phage tail protein-like"/>
    <property type="match status" value="1"/>
</dbReference>
<sequence>MKHRDIRKVIIDALESAIGTDAIYFDGRPAVLEEGDFPAVAVYLTDAEYTGEELDADTWQAILHIEVFLEAQVPDSELDDWMETRVYPVLAEVPGLESLITTMVQQGYDYQRDDDMALWSSADLKYSITYDM</sequence>